<dbReference type="EC" id="3.5.1.88" evidence="1"/>
<dbReference type="EMBL" id="FM178379">
    <property type="protein sequence ID" value="CAQ77760.1"/>
    <property type="molecule type" value="Genomic_DNA"/>
</dbReference>
<dbReference type="RefSeq" id="WP_012548971.1">
    <property type="nucleotide sequence ID" value="NC_011312.1"/>
</dbReference>
<dbReference type="SMR" id="B6EP21"/>
<dbReference type="KEGG" id="vsa:VSAL_I0075"/>
<dbReference type="eggNOG" id="COG0242">
    <property type="taxonomic scope" value="Bacteria"/>
</dbReference>
<dbReference type="HOGENOM" id="CLU_061901_2_1_6"/>
<dbReference type="Proteomes" id="UP000001730">
    <property type="component" value="Chromosome 1"/>
</dbReference>
<dbReference type="GO" id="GO:0046872">
    <property type="term" value="F:metal ion binding"/>
    <property type="evidence" value="ECO:0007669"/>
    <property type="project" value="UniProtKB-KW"/>
</dbReference>
<dbReference type="GO" id="GO:0042586">
    <property type="term" value="F:peptide deformylase activity"/>
    <property type="evidence" value="ECO:0007669"/>
    <property type="project" value="UniProtKB-UniRule"/>
</dbReference>
<dbReference type="GO" id="GO:0043686">
    <property type="term" value="P:co-translational protein modification"/>
    <property type="evidence" value="ECO:0007669"/>
    <property type="project" value="TreeGrafter"/>
</dbReference>
<dbReference type="GO" id="GO:0006412">
    <property type="term" value="P:translation"/>
    <property type="evidence" value="ECO:0007669"/>
    <property type="project" value="UniProtKB-UniRule"/>
</dbReference>
<dbReference type="CDD" id="cd00487">
    <property type="entry name" value="Pep_deformylase"/>
    <property type="match status" value="1"/>
</dbReference>
<dbReference type="FunFam" id="3.90.45.10:FF:000001">
    <property type="entry name" value="Peptide deformylase"/>
    <property type="match status" value="1"/>
</dbReference>
<dbReference type="Gene3D" id="3.90.45.10">
    <property type="entry name" value="Peptide deformylase"/>
    <property type="match status" value="1"/>
</dbReference>
<dbReference type="HAMAP" id="MF_00163">
    <property type="entry name" value="Pep_deformylase"/>
    <property type="match status" value="1"/>
</dbReference>
<dbReference type="InterPro" id="IPR023635">
    <property type="entry name" value="Peptide_deformylase"/>
</dbReference>
<dbReference type="InterPro" id="IPR036821">
    <property type="entry name" value="Peptide_deformylase_sf"/>
</dbReference>
<dbReference type="NCBIfam" id="TIGR00079">
    <property type="entry name" value="pept_deformyl"/>
    <property type="match status" value="1"/>
</dbReference>
<dbReference type="NCBIfam" id="NF001159">
    <property type="entry name" value="PRK00150.1-3"/>
    <property type="match status" value="1"/>
</dbReference>
<dbReference type="PANTHER" id="PTHR10458">
    <property type="entry name" value="PEPTIDE DEFORMYLASE"/>
    <property type="match status" value="1"/>
</dbReference>
<dbReference type="PANTHER" id="PTHR10458:SF21">
    <property type="entry name" value="PEPTIDE DEFORMYLASE"/>
    <property type="match status" value="1"/>
</dbReference>
<dbReference type="Pfam" id="PF01327">
    <property type="entry name" value="Pep_deformylase"/>
    <property type="match status" value="1"/>
</dbReference>
<dbReference type="PIRSF" id="PIRSF004749">
    <property type="entry name" value="Pep_def"/>
    <property type="match status" value="1"/>
</dbReference>
<dbReference type="PRINTS" id="PR01576">
    <property type="entry name" value="PDEFORMYLASE"/>
</dbReference>
<dbReference type="SUPFAM" id="SSF56420">
    <property type="entry name" value="Peptide deformylase"/>
    <property type="match status" value="1"/>
</dbReference>
<sequence length="169" mass="18975">MAVLEVLTFPDDRLRTVAKPVKTVTPEIQTFIDDMIETMYDEEGIGLAATQVDFHQRIVVIDVSETRDEPMVLINPVITQKSGDDGIEEGCLSVPGAKGMVPRSAEVSVTALDRDGNEFSFDADDLLAICVQHELDHLEGKLFVDYLSPLKRKRIKEKLEKIKKFNEKN</sequence>
<gene>
    <name evidence="1" type="primary">def</name>
    <name type="ordered locus">VSAL_I0075</name>
</gene>
<proteinExistence type="inferred from homology"/>
<keyword id="KW-0378">Hydrolase</keyword>
<keyword id="KW-0408">Iron</keyword>
<keyword id="KW-0479">Metal-binding</keyword>
<keyword id="KW-0648">Protein biosynthesis</keyword>
<comment type="function">
    <text evidence="1">Removes the formyl group from the N-terminal Met of newly synthesized proteins. Requires at least a dipeptide for an efficient rate of reaction. N-terminal L-methionine is a prerequisite for activity but the enzyme has broad specificity at other positions.</text>
</comment>
<comment type="catalytic activity">
    <reaction evidence="1">
        <text>N-terminal N-formyl-L-methionyl-[peptide] + H2O = N-terminal L-methionyl-[peptide] + formate</text>
        <dbReference type="Rhea" id="RHEA:24420"/>
        <dbReference type="Rhea" id="RHEA-COMP:10639"/>
        <dbReference type="Rhea" id="RHEA-COMP:10640"/>
        <dbReference type="ChEBI" id="CHEBI:15377"/>
        <dbReference type="ChEBI" id="CHEBI:15740"/>
        <dbReference type="ChEBI" id="CHEBI:49298"/>
        <dbReference type="ChEBI" id="CHEBI:64731"/>
        <dbReference type="EC" id="3.5.1.88"/>
    </reaction>
</comment>
<comment type="cofactor">
    <cofactor evidence="1">
        <name>Fe(2+)</name>
        <dbReference type="ChEBI" id="CHEBI:29033"/>
    </cofactor>
    <text evidence="1">Binds 1 Fe(2+) ion.</text>
</comment>
<comment type="similarity">
    <text evidence="1">Belongs to the polypeptide deformylase family.</text>
</comment>
<accession>B6EP21</accession>
<protein>
    <recommendedName>
        <fullName evidence="1">Peptide deformylase</fullName>
        <shortName evidence="1">PDF</shortName>
        <ecNumber evidence="1">3.5.1.88</ecNumber>
    </recommendedName>
    <alternativeName>
        <fullName evidence="1">Polypeptide deformylase</fullName>
    </alternativeName>
</protein>
<name>DEF_ALISL</name>
<reference key="1">
    <citation type="journal article" date="2008" name="BMC Genomics">
        <title>The genome sequence of the fish pathogen Aliivibrio salmonicida strain LFI1238 shows extensive evidence of gene decay.</title>
        <authorList>
            <person name="Hjerde E."/>
            <person name="Lorentzen M.S."/>
            <person name="Holden M.T."/>
            <person name="Seeger K."/>
            <person name="Paulsen S."/>
            <person name="Bason N."/>
            <person name="Churcher C."/>
            <person name="Harris D."/>
            <person name="Norbertczak H."/>
            <person name="Quail M.A."/>
            <person name="Sanders S."/>
            <person name="Thurston S."/>
            <person name="Parkhill J."/>
            <person name="Willassen N.P."/>
            <person name="Thomson N.R."/>
        </authorList>
    </citation>
    <scope>NUCLEOTIDE SEQUENCE [LARGE SCALE GENOMIC DNA]</scope>
    <source>
        <strain>LFI1238</strain>
    </source>
</reference>
<feature type="chain" id="PRO_1000097293" description="Peptide deformylase">
    <location>
        <begin position="1"/>
        <end position="169"/>
    </location>
</feature>
<feature type="active site" evidence="1">
    <location>
        <position position="134"/>
    </location>
</feature>
<feature type="binding site" evidence="1">
    <location>
        <position position="91"/>
    </location>
    <ligand>
        <name>Fe cation</name>
        <dbReference type="ChEBI" id="CHEBI:24875"/>
    </ligand>
</feature>
<feature type="binding site" evidence="1">
    <location>
        <position position="133"/>
    </location>
    <ligand>
        <name>Fe cation</name>
        <dbReference type="ChEBI" id="CHEBI:24875"/>
    </ligand>
</feature>
<feature type="binding site" evidence="1">
    <location>
        <position position="137"/>
    </location>
    <ligand>
        <name>Fe cation</name>
        <dbReference type="ChEBI" id="CHEBI:24875"/>
    </ligand>
</feature>
<organism>
    <name type="scientific">Aliivibrio salmonicida (strain LFI1238)</name>
    <name type="common">Vibrio salmonicida (strain LFI1238)</name>
    <dbReference type="NCBI Taxonomy" id="316275"/>
    <lineage>
        <taxon>Bacteria</taxon>
        <taxon>Pseudomonadati</taxon>
        <taxon>Pseudomonadota</taxon>
        <taxon>Gammaproteobacteria</taxon>
        <taxon>Vibrionales</taxon>
        <taxon>Vibrionaceae</taxon>
        <taxon>Aliivibrio</taxon>
    </lineage>
</organism>
<evidence type="ECO:0000255" key="1">
    <source>
        <dbReference type="HAMAP-Rule" id="MF_00163"/>
    </source>
</evidence>